<proteinExistence type="inferred from homology"/>
<dbReference type="EC" id="6.3.4.2" evidence="1"/>
<dbReference type="EMBL" id="AP009351">
    <property type="protein sequence ID" value="BAF68303.1"/>
    <property type="molecule type" value="Genomic_DNA"/>
</dbReference>
<dbReference type="RefSeq" id="WP_000159960.1">
    <property type="nucleotide sequence ID" value="NZ_JBBIAE010000008.1"/>
</dbReference>
<dbReference type="SMR" id="A6QIX1"/>
<dbReference type="MEROPS" id="C26.964"/>
<dbReference type="KEGG" id="sae:NWMN_2031"/>
<dbReference type="HOGENOM" id="CLU_011675_5_0_9"/>
<dbReference type="UniPathway" id="UPA00159">
    <property type="reaction ID" value="UER00277"/>
</dbReference>
<dbReference type="Proteomes" id="UP000006386">
    <property type="component" value="Chromosome"/>
</dbReference>
<dbReference type="GO" id="GO:0005829">
    <property type="term" value="C:cytosol"/>
    <property type="evidence" value="ECO:0007669"/>
    <property type="project" value="TreeGrafter"/>
</dbReference>
<dbReference type="GO" id="GO:0005524">
    <property type="term" value="F:ATP binding"/>
    <property type="evidence" value="ECO:0007669"/>
    <property type="project" value="UniProtKB-KW"/>
</dbReference>
<dbReference type="GO" id="GO:0003883">
    <property type="term" value="F:CTP synthase activity"/>
    <property type="evidence" value="ECO:0007669"/>
    <property type="project" value="UniProtKB-UniRule"/>
</dbReference>
<dbReference type="GO" id="GO:0004359">
    <property type="term" value="F:glutaminase activity"/>
    <property type="evidence" value="ECO:0007669"/>
    <property type="project" value="RHEA"/>
</dbReference>
<dbReference type="GO" id="GO:0042802">
    <property type="term" value="F:identical protein binding"/>
    <property type="evidence" value="ECO:0007669"/>
    <property type="project" value="TreeGrafter"/>
</dbReference>
<dbReference type="GO" id="GO:0046872">
    <property type="term" value="F:metal ion binding"/>
    <property type="evidence" value="ECO:0007669"/>
    <property type="project" value="UniProtKB-KW"/>
</dbReference>
<dbReference type="GO" id="GO:0044210">
    <property type="term" value="P:'de novo' CTP biosynthetic process"/>
    <property type="evidence" value="ECO:0007669"/>
    <property type="project" value="UniProtKB-UniRule"/>
</dbReference>
<dbReference type="GO" id="GO:0019856">
    <property type="term" value="P:pyrimidine nucleobase biosynthetic process"/>
    <property type="evidence" value="ECO:0007669"/>
    <property type="project" value="TreeGrafter"/>
</dbReference>
<dbReference type="CDD" id="cd03113">
    <property type="entry name" value="CTPS_N"/>
    <property type="match status" value="1"/>
</dbReference>
<dbReference type="CDD" id="cd01746">
    <property type="entry name" value="GATase1_CTP_Synthase"/>
    <property type="match status" value="1"/>
</dbReference>
<dbReference type="FunFam" id="3.40.50.300:FF:000009">
    <property type="entry name" value="CTP synthase"/>
    <property type="match status" value="1"/>
</dbReference>
<dbReference type="FunFam" id="3.40.50.880:FF:000002">
    <property type="entry name" value="CTP synthase"/>
    <property type="match status" value="1"/>
</dbReference>
<dbReference type="Gene3D" id="3.40.50.880">
    <property type="match status" value="1"/>
</dbReference>
<dbReference type="Gene3D" id="3.40.50.300">
    <property type="entry name" value="P-loop containing nucleotide triphosphate hydrolases"/>
    <property type="match status" value="1"/>
</dbReference>
<dbReference type="HAMAP" id="MF_01227">
    <property type="entry name" value="PyrG"/>
    <property type="match status" value="1"/>
</dbReference>
<dbReference type="InterPro" id="IPR029062">
    <property type="entry name" value="Class_I_gatase-like"/>
</dbReference>
<dbReference type="InterPro" id="IPR004468">
    <property type="entry name" value="CTP_synthase"/>
</dbReference>
<dbReference type="InterPro" id="IPR017456">
    <property type="entry name" value="CTP_synthase_N"/>
</dbReference>
<dbReference type="InterPro" id="IPR017926">
    <property type="entry name" value="GATASE"/>
</dbReference>
<dbReference type="InterPro" id="IPR033828">
    <property type="entry name" value="GATase1_CTP_Synthase"/>
</dbReference>
<dbReference type="InterPro" id="IPR027417">
    <property type="entry name" value="P-loop_NTPase"/>
</dbReference>
<dbReference type="NCBIfam" id="NF003792">
    <property type="entry name" value="PRK05380.1"/>
    <property type="match status" value="1"/>
</dbReference>
<dbReference type="NCBIfam" id="TIGR00337">
    <property type="entry name" value="PyrG"/>
    <property type="match status" value="1"/>
</dbReference>
<dbReference type="PANTHER" id="PTHR11550">
    <property type="entry name" value="CTP SYNTHASE"/>
    <property type="match status" value="1"/>
</dbReference>
<dbReference type="PANTHER" id="PTHR11550:SF0">
    <property type="entry name" value="CTP SYNTHASE-RELATED"/>
    <property type="match status" value="1"/>
</dbReference>
<dbReference type="Pfam" id="PF06418">
    <property type="entry name" value="CTP_synth_N"/>
    <property type="match status" value="1"/>
</dbReference>
<dbReference type="Pfam" id="PF00117">
    <property type="entry name" value="GATase"/>
    <property type="match status" value="1"/>
</dbReference>
<dbReference type="SUPFAM" id="SSF52317">
    <property type="entry name" value="Class I glutamine amidotransferase-like"/>
    <property type="match status" value="1"/>
</dbReference>
<dbReference type="SUPFAM" id="SSF52540">
    <property type="entry name" value="P-loop containing nucleoside triphosphate hydrolases"/>
    <property type="match status" value="1"/>
</dbReference>
<dbReference type="PROSITE" id="PS51273">
    <property type="entry name" value="GATASE_TYPE_1"/>
    <property type="match status" value="1"/>
</dbReference>
<name>PYRG_STAAE</name>
<accession>A6QIX1</accession>
<evidence type="ECO:0000255" key="1">
    <source>
        <dbReference type="HAMAP-Rule" id="MF_01227"/>
    </source>
</evidence>
<organism>
    <name type="scientific">Staphylococcus aureus (strain Newman)</name>
    <dbReference type="NCBI Taxonomy" id="426430"/>
    <lineage>
        <taxon>Bacteria</taxon>
        <taxon>Bacillati</taxon>
        <taxon>Bacillota</taxon>
        <taxon>Bacilli</taxon>
        <taxon>Bacillales</taxon>
        <taxon>Staphylococcaceae</taxon>
        <taxon>Staphylococcus</taxon>
    </lineage>
</organism>
<feature type="chain" id="PRO_1000139586" description="CTP synthase">
    <location>
        <begin position="1"/>
        <end position="536"/>
    </location>
</feature>
<feature type="domain" description="Glutamine amidotransferase type-1" evidence="1">
    <location>
        <begin position="293"/>
        <end position="535"/>
    </location>
</feature>
<feature type="region of interest" description="Amidoligase domain" evidence="1">
    <location>
        <begin position="1"/>
        <end position="267"/>
    </location>
</feature>
<feature type="active site" description="Nucleophile; for glutamine hydrolysis" evidence="1">
    <location>
        <position position="382"/>
    </location>
</feature>
<feature type="active site" evidence="1">
    <location>
        <position position="508"/>
    </location>
</feature>
<feature type="active site" evidence="1">
    <location>
        <position position="510"/>
    </location>
</feature>
<feature type="binding site" evidence="1">
    <location>
        <position position="13"/>
    </location>
    <ligand>
        <name>CTP</name>
        <dbReference type="ChEBI" id="CHEBI:37563"/>
        <note>allosteric inhibitor</note>
    </ligand>
</feature>
<feature type="binding site" evidence="1">
    <location>
        <position position="13"/>
    </location>
    <ligand>
        <name>UTP</name>
        <dbReference type="ChEBI" id="CHEBI:46398"/>
    </ligand>
</feature>
<feature type="binding site" evidence="1">
    <location>
        <begin position="14"/>
        <end position="19"/>
    </location>
    <ligand>
        <name>ATP</name>
        <dbReference type="ChEBI" id="CHEBI:30616"/>
    </ligand>
</feature>
<feature type="binding site" evidence="1">
    <location>
        <position position="54"/>
    </location>
    <ligand>
        <name>L-glutamine</name>
        <dbReference type="ChEBI" id="CHEBI:58359"/>
    </ligand>
</feature>
<feature type="binding site" evidence="1">
    <location>
        <position position="71"/>
    </location>
    <ligand>
        <name>ATP</name>
        <dbReference type="ChEBI" id="CHEBI:30616"/>
    </ligand>
</feature>
<feature type="binding site" evidence="1">
    <location>
        <position position="71"/>
    </location>
    <ligand>
        <name>Mg(2+)</name>
        <dbReference type="ChEBI" id="CHEBI:18420"/>
    </ligand>
</feature>
<feature type="binding site" evidence="1">
    <location>
        <position position="141"/>
    </location>
    <ligand>
        <name>Mg(2+)</name>
        <dbReference type="ChEBI" id="CHEBI:18420"/>
    </ligand>
</feature>
<feature type="binding site" evidence="1">
    <location>
        <begin position="148"/>
        <end position="150"/>
    </location>
    <ligand>
        <name>CTP</name>
        <dbReference type="ChEBI" id="CHEBI:37563"/>
        <note>allosteric inhibitor</note>
    </ligand>
</feature>
<feature type="binding site" evidence="1">
    <location>
        <begin position="188"/>
        <end position="193"/>
    </location>
    <ligand>
        <name>CTP</name>
        <dbReference type="ChEBI" id="CHEBI:37563"/>
        <note>allosteric inhibitor</note>
    </ligand>
</feature>
<feature type="binding site" evidence="1">
    <location>
        <begin position="188"/>
        <end position="193"/>
    </location>
    <ligand>
        <name>UTP</name>
        <dbReference type="ChEBI" id="CHEBI:46398"/>
    </ligand>
</feature>
<feature type="binding site" evidence="1">
    <location>
        <position position="224"/>
    </location>
    <ligand>
        <name>CTP</name>
        <dbReference type="ChEBI" id="CHEBI:37563"/>
        <note>allosteric inhibitor</note>
    </ligand>
</feature>
<feature type="binding site" evidence="1">
    <location>
        <position position="224"/>
    </location>
    <ligand>
        <name>UTP</name>
        <dbReference type="ChEBI" id="CHEBI:46398"/>
    </ligand>
</feature>
<feature type="binding site" evidence="1">
    <location>
        <begin position="240"/>
        <end position="242"/>
    </location>
    <ligand>
        <name>ATP</name>
        <dbReference type="ChEBI" id="CHEBI:30616"/>
    </ligand>
</feature>
<feature type="binding site" evidence="1">
    <location>
        <position position="355"/>
    </location>
    <ligand>
        <name>L-glutamine</name>
        <dbReference type="ChEBI" id="CHEBI:58359"/>
    </ligand>
</feature>
<feature type="binding site" evidence="1">
    <location>
        <begin position="383"/>
        <end position="386"/>
    </location>
    <ligand>
        <name>L-glutamine</name>
        <dbReference type="ChEBI" id="CHEBI:58359"/>
    </ligand>
</feature>
<feature type="binding site" evidence="1">
    <location>
        <position position="406"/>
    </location>
    <ligand>
        <name>L-glutamine</name>
        <dbReference type="ChEBI" id="CHEBI:58359"/>
    </ligand>
</feature>
<feature type="binding site" evidence="1">
    <location>
        <position position="463"/>
    </location>
    <ligand>
        <name>L-glutamine</name>
        <dbReference type="ChEBI" id="CHEBI:58359"/>
    </ligand>
</feature>
<reference key="1">
    <citation type="journal article" date="2008" name="J. Bacteriol.">
        <title>Genome sequence of Staphylococcus aureus strain Newman and comparative analysis of staphylococcal genomes: polymorphism and evolution of two major pathogenicity islands.</title>
        <authorList>
            <person name="Baba T."/>
            <person name="Bae T."/>
            <person name="Schneewind O."/>
            <person name="Takeuchi F."/>
            <person name="Hiramatsu K."/>
        </authorList>
    </citation>
    <scope>NUCLEOTIDE SEQUENCE [LARGE SCALE GENOMIC DNA]</scope>
    <source>
        <strain>Newman</strain>
    </source>
</reference>
<gene>
    <name evidence="1" type="primary">pyrG</name>
    <name type="ordered locus">NWMN_2031</name>
</gene>
<keyword id="KW-0067">ATP-binding</keyword>
<keyword id="KW-0315">Glutamine amidotransferase</keyword>
<keyword id="KW-0436">Ligase</keyword>
<keyword id="KW-0460">Magnesium</keyword>
<keyword id="KW-0479">Metal-binding</keyword>
<keyword id="KW-0547">Nucleotide-binding</keyword>
<keyword id="KW-0665">Pyrimidine biosynthesis</keyword>
<sequence length="536" mass="59992">MTKFIFVTGGVVSSLGKGITASSLGRLLKDRGLNVTIQKFDPYLNVDPGTMSPYQHGEVFVTDDGAETDLDLGHYERFIDINLNKFSNVTAGKVYSHVLKKERRGDYLGGTVQVIPHITNEIKERLLLAGESTNADVVITEIGGTTGDIESLPFIEAIRQIRSDLGRENVMYVHCTLLPYIKAAGEMKTKPTQHSVKELRGLGIQPDLIVVRTEYEMTQDLKDKIALFCDINKESVIECRDADSLYEIPLQLSQQNMDDIVIKRLQLNAKYETQLDEWKQLLDIVNNLDGKITIGLVGKYVSLQDAYLSVVESLKHAGYPFAKDIDIRWIDSSEVTDENAAEYLADVDGILVPGGFGFRASEGKISAIKYARENNVPFFGICLGMQLATVEFSRNVLGLEGAHSAELDPATPYPIIDLLPEQKDIEDLGGTLRLGLYPCSIKEGTLAQDVYGKAEIEERHRHRYEFNNDYREQLEANGMVISGTSPDGRLVEMVEIPTNDFFIACQFHPEFLSRPNRPHPIFKSFIEASLKYQQNK</sequence>
<comment type="function">
    <text evidence="1">Catalyzes the ATP-dependent amination of UTP to CTP with either L-glutamine or ammonia as the source of nitrogen. Regulates intracellular CTP levels through interactions with the four ribonucleotide triphosphates.</text>
</comment>
<comment type="catalytic activity">
    <reaction evidence="1">
        <text>UTP + L-glutamine + ATP + H2O = CTP + L-glutamate + ADP + phosphate + 2 H(+)</text>
        <dbReference type="Rhea" id="RHEA:26426"/>
        <dbReference type="ChEBI" id="CHEBI:15377"/>
        <dbReference type="ChEBI" id="CHEBI:15378"/>
        <dbReference type="ChEBI" id="CHEBI:29985"/>
        <dbReference type="ChEBI" id="CHEBI:30616"/>
        <dbReference type="ChEBI" id="CHEBI:37563"/>
        <dbReference type="ChEBI" id="CHEBI:43474"/>
        <dbReference type="ChEBI" id="CHEBI:46398"/>
        <dbReference type="ChEBI" id="CHEBI:58359"/>
        <dbReference type="ChEBI" id="CHEBI:456216"/>
        <dbReference type="EC" id="6.3.4.2"/>
    </reaction>
</comment>
<comment type="catalytic activity">
    <reaction evidence="1">
        <text>L-glutamine + H2O = L-glutamate + NH4(+)</text>
        <dbReference type="Rhea" id="RHEA:15889"/>
        <dbReference type="ChEBI" id="CHEBI:15377"/>
        <dbReference type="ChEBI" id="CHEBI:28938"/>
        <dbReference type="ChEBI" id="CHEBI:29985"/>
        <dbReference type="ChEBI" id="CHEBI:58359"/>
    </reaction>
</comment>
<comment type="catalytic activity">
    <reaction evidence="1">
        <text>UTP + NH4(+) + ATP = CTP + ADP + phosphate + 2 H(+)</text>
        <dbReference type="Rhea" id="RHEA:16597"/>
        <dbReference type="ChEBI" id="CHEBI:15378"/>
        <dbReference type="ChEBI" id="CHEBI:28938"/>
        <dbReference type="ChEBI" id="CHEBI:30616"/>
        <dbReference type="ChEBI" id="CHEBI:37563"/>
        <dbReference type="ChEBI" id="CHEBI:43474"/>
        <dbReference type="ChEBI" id="CHEBI:46398"/>
        <dbReference type="ChEBI" id="CHEBI:456216"/>
    </reaction>
</comment>
<comment type="activity regulation">
    <text evidence="1">Allosterically activated by GTP, when glutamine is the substrate; GTP has no effect on the reaction when ammonia is the substrate. The allosteric effector GTP functions by stabilizing the protein conformation that binds the tetrahedral intermediate(s) formed during glutamine hydrolysis. Inhibited by the product CTP, via allosteric rather than competitive inhibition.</text>
</comment>
<comment type="pathway">
    <text evidence="1">Pyrimidine metabolism; CTP biosynthesis via de novo pathway; CTP from UDP: step 2/2.</text>
</comment>
<comment type="subunit">
    <text evidence="1">Homotetramer.</text>
</comment>
<comment type="miscellaneous">
    <text evidence="1">CTPSs have evolved a hybrid strategy for distinguishing between UTP and CTP. The overlapping regions of the product feedback inhibitory and substrate sites recognize a common feature in both compounds, the triphosphate moiety. To differentiate isosteric substrate and product pyrimidine rings, an additional pocket far from the expected kinase/ligase catalytic site, specifically recognizes the cytosine and ribose portions of the product inhibitor.</text>
</comment>
<comment type="similarity">
    <text evidence="1">Belongs to the CTP synthase family.</text>
</comment>
<protein>
    <recommendedName>
        <fullName evidence="1">CTP synthase</fullName>
        <ecNumber evidence="1">6.3.4.2</ecNumber>
    </recommendedName>
    <alternativeName>
        <fullName evidence="1">Cytidine 5'-triphosphate synthase</fullName>
    </alternativeName>
    <alternativeName>
        <fullName evidence="1">Cytidine triphosphate synthetase</fullName>
        <shortName evidence="1">CTP synthetase</shortName>
        <shortName evidence="1">CTPS</shortName>
    </alternativeName>
    <alternativeName>
        <fullName evidence="1">UTP--ammonia ligase</fullName>
    </alternativeName>
</protein>